<protein>
    <recommendedName>
        <fullName>Pre-mRNA-splicing factor SPF27</fullName>
    </recommendedName>
    <alternativeName>
        <fullName>Breast carcinoma-amplified sequence 2 homolog</fullName>
    </alternativeName>
</protein>
<evidence type="ECO:0000250" key="1">
    <source>
        <dbReference type="UniProtKB" id="O75934"/>
    </source>
</evidence>
<evidence type="ECO:0000255" key="2"/>
<evidence type="ECO:0000305" key="3"/>
<dbReference type="EMBL" id="CR858884">
    <property type="protein sequence ID" value="CAH91083.1"/>
    <property type="molecule type" value="mRNA"/>
</dbReference>
<dbReference type="RefSeq" id="NP_001125629.1">
    <property type="nucleotide sequence ID" value="NM_001132157.1"/>
</dbReference>
<dbReference type="SMR" id="Q5RAX7"/>
<dbReference type="STRING" id="9601.ENSPPYP00000001168"/>
<dbReference type="GeneID" id="100172547"/>
<dbReference type="KEGG" id="pon:100172547"/>
<dbReference type="CTD" id="10286"/>
<dbReference type="eggNOG" id="KOG3096">
    <property type="taxonomic scope" value="Eukaryota"/>
</dbReference>
<dbReference type="InParanoid" id="Q5RAX7"/>
<dbReference type="OrthoDB" id="205794at2759"/>
<dbReference type="Proteomes" id="UP000001595">
    <property type="component" value="Unplaced"/>
</dbReference>
<dbReference type="GO" id="GO:0005730">
    <property type="term" value="C:nucleolus"/>
    <property type="evidence" value="ECO:0007669"/>
    <property type="project" value="UniProtKB-SubCell"/>
</dbReference>
<dbReference type="GO" id="GO:0005634">
    <property type="term" value="C:nucleus"/>
    <property type="evidence" value="ECO:0000250"/>
    <property type="project" value="UniProtKB"/>
</dbReference>
<dbReference type="GO" id="GO:0071011">
    <property type="term" value="C:precatalytic spliceosome"/>
    <property type="evidence" value="ECO:0007669"/>
    <property type="project" value="TreeGrafter"/>
</dbReference>
<dbReference type="GO" id="GO:0000974">
    <property type="term" value="C:Prp19 complex"/>
    <property type="evidence" value="ECO:0000250"/>
    <property type="project" value="UniProtKB"/>
</dbReference>
<dbReference type="GO" id="GO:0071007">
    <property type="term" value="C:U2-type catalytic step 2 spliceosome"/>
    <property type="evidence" value="ECO:0000250"/>
    <property type="project" value="UniProtKB"/>
</dbReference>
<dbReference type="GO" id="GO:0000398">
    <property type="term" value="P:mRNA splicing, via spliceosome"/>
    <property type="evidence" value="ECO:0000250"/>
    <property type="project" value="UniProtKB"/>
</dbReference>
<dbReference type="InterPro" id="IPR008409">
    <property type="entry name" value="SPF27"/>
</dbReference>
<dbReference type="PANTHER" id="PTHR13296">
    <property type="entry name" value="BCAS2 PROTEIN"/>
    <property type="match status" value="1"/>
</dbReference>
<dbReference type="PANTHER" id="PTHR13296:SF0">
    <property type="entry name" value="PRE-MRNA-SPLICING FACTOR SPF27"/>
    <property type="match status" value="1"/>
</dbReference>
<dbReference type="Pfam" id="PF05700">
    <property type="entry name" value="BCAS2"/>
    <property type="match status" value="1"/>
</dbReference>
<comment type="function">
    <text evidence="1">Required for pre-mRNA splicing as component of the activated spliceosome. Component of the PRP19-CDC5L complex that forms an integral part of the spliceosome and is required for activating pre-mRNA splicing. May have a scaffolding role in the spliceosome assembly as it contacts all other components of the core complex. The PRP19-CDC5L complex may also play a role in the response to DNA damage (DDR).</text>
</comment>
<comment type="subunit">
    <text evidence="1">Component of the pre-catalytic and catalytic spliceosome complexes. Component of the postcatalytic spliceosome P complex. Component of the PRP19-CDC5L splicing complex composed of a core complex comprising a homotetramer of PRPF19, CDC5L, PLRG1 and BCAS2, and at least three less stably associated proteins CTNNBL1, CWC15 and HSPA8. Interacts directly in the complex with PRPF19, CDC5L and PLRG1.</text>
</comment>
<comment type="subcellular location">
    <subcellularLocation>
        <location evidence="1">Nucleus</location>
    </subcellularLocation>
    <subcellularLocation>
        <location evidence="1">Nucleus</location>
        <location evidence="1">Nucleolus</location>
    </subcellularLocation>
</comment>
<comment type="similarity">
    <text evidence="3">Belongs to the SPF27 family.</text>
</comment>
<feature type="initiator methionine" description="Removed" evidence="1">
    <location>
        <position position="1"/>
    </location>
</feature>
<feature type="chain" id="PRO_0000064863" description="Pre-mRNA-splicing factor SPF27">
    <location>
        <begin position="2"/>
        <end position="226"/>
    </location>
</feature>
<feature type="coiled-coil region" evidence="2">
    <location>
        <begin position="139"/>
        <end position="223"/>
    </location>
</feature>
<feature type="modified residue" description="N-acetylalanine" evidence="1">
    <location>
        <position position="2"/>
    </location>
</feature>
<feature type="modified residue" description="Phosphoserine" evidence="1">
    <location>
        <position position="94"/>
    </location>
</feature>
<keyword id="KW-0007">Acetylation</keyword>
<keyword id="KW-0175">Coiled coil</keyword>
<keyword id="KW-0507">mRNA processing</keyword>
<keyword id="KW-0508">mRNA splicing</keyword>
<keyword id="KW-0539">Nucleus</keyword>
<keyword id="KW-0597">Phosphoprotein</keyword>
<keyword id="KW-1185">Reference proteome</keyword>
<keyword id="KW-0747">Spliceosome</keyword>
<organism>
    <name type="scientific">Pongo abelii</name>
    <name type="common">Sumatran orangutan</name>
    <name type="synonym">Pongo pygmaeus abelii</name>
    <dbReference type="NCBI Taxonomy" id="9601"/>
    <lineage>
        <taxon>Eukaryota</taxon>
        <taxon>Metazoa</taxon>
        <taxon>Chordata</taxon>
        <taxon>Craniata</taxon>
        <taxon>Vertebrata</taxon>
        <taxon>Euteleostomi</taxon>
        <taxon>Mammalia</taxon>
        <taxon>Eutheria</taxon>
        <taxon>Euarchontoglires</taxon>
        <taxon>Primates</taxon>
        <taxon>Haplorrhini</taxon>
        <taxon>Catarrhini</taxon>
        <taxon>Hominidae</taxon>
        <taxon>Pongo</taxon>
    </lineage>
</organism>
<reference key="1">
    <citation type="submission" date="2004-11" db="EMBL/GenBank/DDBJ databases">
        <authorList>
            <consortium name="The German cDNA consortium"/>
        </authorList>
    </citation>
    <scope>NUCLEOTIDE SEQUENCE [LARGE SCALE MRNA]</scope>
    <source>
        <tissue>Kidney</tissue>
    </source>
</reference>
<name>SPF27_PONAB</name>
<sequence>MAGTGLVAGEVVVDALPYFDQGYEAPGVREAAAALVEEETRRYRPTKNYLSYLTAPDYSAFETDIMRNEFERLAARQPIELLSMKRYELPAPPSGQKKNDITAWQECVNNSMAQLEHQAVRIENLELMSQHGCNAWKVYNENLVHMIEHAQKELQKLRKHIQDLNWQRKNMQLTAGSKLREMESNWVSLVSKNYEIERTIVQLENEIYQIKQQHGEANKENIRQDF</sequence>
<gene>
    <name type="primary">BCAS2</name>
</gene>
<accession>Q5RAX7</accession>
<proteinExistence type="evidence at transcript level"/>